<organism>
    <name type="scientific">Jannaschia sp. (strain CCS1)</name>
    <dbReference type="NCBI Taxonomy" id="290400"/>
    <lineage>
        <taxon>Bacteria</taxon>
        <taxon>Pseudomonadati</taxon>
        <taxon>Pseudomonadota</taxon>
        <taxon>Alphaproteobacteria</taxon>
        <taxon>Rhodobacterales</taxon>
        <taxon>Roseobacteraceae</taxon>
        <taxon>Jannaschia</taxon>
    </lineage>
</organism>
<dbReference type="EMBL" id="CP000264">
    <property type="protein sequence ID" value="ABD53525.1"/>
    <property type="molecule type" value="Genomic_DNA"/>
</dbReference>
<dbReference type="RefSeq" id="WP_011453733.1">
    <property type="nucleotide sequence ID" value="NC_007802.1"/>
</dbReference>
<dbReference type="SMR" id="Q28UT7"/>
<dbReference type="STRING" id="290400.Jann_0608"/>
<dbReference type="KEGG" id="jan:Jann_0608"/>
<dbReference type="eggNOG" id="COG0098">
    <property type="taxonomic scope" value="Bacteria"/>
</dbReference>
<dbReference type="HOGENOM" id="CLU_065898_2_2_5"/>
<dbReference type="OrthoDB" id="9809045at2"/>
<dbReference type="Proteomes" id="UP000008326">
    <property type="component" value="Chromosome"/>
</dbReference>
<dbReference type="GO" id="GO:0015935">
    <property type="term" value="C:small ribosomal subunit"/>
    <property type="evidence" value="ECO:0007669"/>
    <property type="project" value="InterPro"/>
</dbReference>
<dbReference type="GO" id="GO:0019843">
    <property type="term" value="F:rRNA binding"/>
    <property type="evidence" value="ECO:0007669"/>
    <property type="project" value="UniProtKB-UniRule"/>
</dbReference>
<dbReference type="GO" id="GO:0003735">
    <property type="term" value="F:structural constituent of ribosome"/>
    <property type="evidence" value="ECO:0007669"/>
    <property type="project" value="InterPro"/>
</dbReference>
<dbReference type="GO" id="GO:0006412">
    <property type="term" value="P:translation"/>
    <property type="evidence" value="ECO:0007669"/>
    <property type="project" value="UniProtKB-UniRule"/>
</dbReference>
<dbReference type="FunFam" id="3.30.160.20:FF:000001">
    <property type="entry name" value="30S ribosomal protein S5"/>
    <property type="match status" value="1"/>
</dbReference>
<dbReference type="FunFam" id="3.30.230.10:FF:000002">
    <property type="entry name" value="30S ribosomal protein S5"/>
    <property type="match status" value="1"/>
</dbReference>
<dbReference type="Gene3D" id="3.30.160.20">
    <property type="match status" value="1"/>
</dbReference>
<dbReference type="Gene3D" id="3.30.230.10">
    <property type="match status" value="1"/>
</dbReference>
<dbReference type="HAMAP" id="MF_01307_B">
    <property type="entry name" value="Ribosomal_uS5_B"/>
    <property type="match status" value="1"/>
</dbReference>
<dbReference type="InterPro" id="IPR020568">
    <property type="entry name" value="Ribosomal_Su5_D2-typ_SF"/>
</dbReference>
<dbReference type="InterPro" id="IPR000851">
    <property type="entry name" value="Ribosomal_uS5"/>
</dbReference>
<dbReference type="InterPro" id="IPR005712">
    <property type="entry name" value="Ribosomal_uS5_bac-type"/>
</dbReference>
<dbReference type="InterPro" id="IPR005324">
    <property type="entry name" value="Ribosomal_uS5_C"/>
</dbReference>
<dbReference type="InterPro" id="IPR013810">
    <property type="entry name" value="Ribosomal_uS5_N"/>
</dbReference>
<dbReference type="InterPro" id="IPR018192">
    <property type="entry name" value="Ribosomal_uS5_N_CS"/>
</dbReference>
<dbReference type="InterPro" id="IPR014721">
    <property type="entry name" value="Ribsml_uS5_D2-typ_fold_subgr"/>
</dbReference>
<dbReference type="NCBIfam" id="TIGR01021">
    <property type="entry name" value="rpsE_bact"/>
    <property type="match status" value="1"/>
</dbReference>
<dbReference type="PANTHER" id="PTHR48277">
    <property type="entry name" value="MITOCHONDRIAL RIBOSOMAL PROTEIN S5"/>
    <property type="match status" value="1"/>
</dbReference>
<dbReference type="PANTHER" id="PTHR48277:SF1">
    <property type="entry name" value="MITOCHONDRIAL RIBOSOMAL PROTEIN S5"/>
    <property type="match status" value="1"/>
</dbReference>
<dbReference type="Pfam" id="PF00333">
    <property type="entry name" value="Ribosomal_S5"/>
    <property type="match status" value="1"/>
</dbReference>
<dbReference type="Pfam" id="PF03719">
    <property type="entry name" value="Ribosomal_S5_C"/>
    <property type="match status" value="1"/>
</dbReference>
<dbReference type="SUPFAM" id="SSF54768">
    <property type="entry name" value="dsRNA-binding domain-like"/>
    <property type="match status" value="1"/>
</dbReference>
<dbReference type="SUPFAM" id="SSF54211">
    <property type="entry name" value="Ribosomal protein S5 domain 2-like"/>
    <property type="match status" value="1"/>
</dbReference>
<dbReference type="PROSITE" id="PS00585">
    <property type="entry name" value="RIBOSOMAL_S5"/>
    <property type="match status" value="1"/>
</dbReference>
<dbReference type="PROSITE" id="PS50881">
    <property type="entry name" value="S5_DSRBD"/>
    <property type="match status" value="1"/>
</dbReference>
<protein>
    <recommendedName>
        <fullName evidence="1">Small ribosomal subunit protein uS5</fullName>
    </recommendedName>
    <alternativeName>
        <fullName evidence="3">30S ribosomal protein S5</fullName>
    </alternativeName>
</protein>
<evidence type="ECO:0000255" key="1">
    <source>
        <dbReference type="HAMAP-Rule" id="MF_01307"/>
    </source>
</evidence>
<evidence type="ECO:0000256" key="2">
    <source>
        <dbReference type="SAM" id="MobiDB-lite"/>
    </source>
</evidence>
<evidence type="ECO:0000305" key="3"/>
<feature type="chain" id="PRO_1000086019" description="Small ribosomal subunit protein uS5">
    <location>
        <begin position="1"/>
        <end position="197"/>
    </location>
</feature>
<feature type="domain" description="S5 DRBM" evidence="1">
    <location>
        <begin position="22"/>
        <end position="85"/>
    </location>
</feature>
<feature type="region of interest" description="Disordered" evidence="2">
    <location>
        <begin position="1"/>
        <end position="22"/>
    </location>
</feature>
<feature type="region of interest" description="Disordered" evidence="2">
    <location>
        <begin position="158"/>
        <end position="197"/>
    </location>
</feature>
<feature type="compositionally biased region" description="Basic and acidic residues" evidence="2">
    <location>
        <begin position="1"/>
        <end position="17"/>
    </location>
</feature>
<feature type="compositionally biased region" description="Basic and acidic residues" evidence="2">
    <location>
        <begin position="172"/>
        <end position="186"/>
    </location>
</feature>
<accession>Q28UT7</accession>
<keyword id="KW-1185">Reference proteome</keyword>
<keyword id="KW-0687">Ribonucleoprotein</keyword>
<keyword id="KW-0689">Ribosomal protein</keyword>
<keyword id="KW-0694">RNA-binding</keyword>
<keyword id="KW-0699">rRNA-binding</keyword>
<sequence length="197" mass="21518">MAERENRGRGRGRNREEETPEFADRLVAINRVSKTVKGGKRFGFAALVVVGDQRGRVGFGKGKAKEVPEAIRKATEQAKRQLIRVPLKEGRTLHHDVKGHHGAGKVVMRTAPEGTGIIAGGPMRAVFEMLGVKDVVSKSTGSQNPYNMIRATLDGLRNESSPRQVASRRGKKVADILPKRDDHPQIDGEQAPVSEEA</sequence>
<comment type="function">
    <text evidence="1">With S4 and S12 plays an important role in translational accuracy.</text>
</comment>
<comment type="function">
    <text evidence="1">Located at the back of the 30S subunit body where it stabilizes the conformation of the head with respect to the body.</text>
</comment>
<comment type="subunit">
    <text evidence="1">Part of the 30S ribosomal subunit. Contacts proteins S4 and S8.</text>
</comment>
<comment type="domain">
    <text>The N-terminal domain interacts with the head of the 30S subunit; the C-terminal domain interacts with the body and contacts protein S4. The interaction surface between S4 and S5 is involved in control of translational fidelity.</text>
</comment>
<comment type="similarity">
    <text evidence="1">Belongs to the universal ribosomal protein uS5 family.</text>
</comment>
<gene>
    <name evidence="1" type="primary">rpsE</name>
    <name type="ordered locus">Jann_0608</name>
</gene>
<reference key="1">
    <citation type="submission" date="2006-02" db="EMBL/GenBank/DDBJ databases">
        <title>Complete sequence of chromosome of Jannaschia sp. CCS1.</title>
        <authorList>
            <consortium name="US DOE Joint Genome Institute"/>
            <person name="Copeland A."/>
            <person name="Lucas S."/>
            <person name="Lapidus A."/>
            <person name="Barry K."/>
            <person name="Detter J.C."/>
            <person name="Glavina del Rio T."/>
            <person name="Hammon N."/>
            <person name="Israni S."/>
            <person name="Pitluck S."/>
            <person name="Brettin T."/>
            <person name="Bruce D."/>
            <person name="Han C."/>
            <person name="Tapia R."/>
            <person name="Gilna P."/>
            <person name="Chertkov O."/>
            <person name="Saunders E."/>
            <person name="Schmutz J."/>
            <person name="Larimer F."/>
            <person name="Land M."/>
            <person name="Kyrpides N."/>
            <person name="Lykidis A."/>
            <person name="Moran M.A."/>
            <person name="Belas R."/>
            <person name="Ye W."/>
            <person name="Buchan A."/>
            <person name="Gonzalez J.M."/>
            <person name="Schell M.A."/>
            <person name="Richardson P."/>
        </authorList>
    </citation>
    <scope>NUCLEOTIDE SEQUENCE [LARGE SCALE GENOMIC DNA]</scope>
    <source>
        <strain>CCS1</strain>
    </source>
</reference>
<name>RS5_JANSC</name>
<proteinExistence type="inferred from homology"/>